<comment type="function">
    <text evidence="1">Binds 16S rRNA, required for the assembly of 30S particles and may also be responsible for determining the conformation of the 16S rRNA at the A site.</text>
</comment>
<comment type="subunit">
    <text evidence="1">Part of the 30S ribosomal subunit. Contacts proteins S3 and S10.</text>
</comment>
<comment type="similarity">
    <text evidence="1">Belongs to the universal ribosomal protein uS14 family.</text>
</comment>
<dbReference type="EMBL" id="AE006914">
    <property type="protein sequence ID" value="AAL03531.1"/>
    <property type="molecule type" value="Genomic_DNA"/>
</dbReference>
<dbReference type="PIR" id="A97824">
    <property type="entry name" value="A97824"/>
</dbReference>
<dbReference type="RefSeq" id="WP_008580947.1">
    <property type="nucleotide sequence ID" value="NC_003103.1"/>
</dbReference>
<dbReference type="SMR" id="Q92GX9"/>
<dbReference type="GeneID" id="928139"/>
<dbReference type="KEGG" id="rco:RC0993"/>
<dbReference type="HOGENOM" id="CLU_139869_0_1_5"/>
<dbReference type="Proteomes" id="UP000000816">
    <property type="component" value="Chromosome"/>
</dbReference>
<dbReference type="GO" id="GO:0005737">
    <property type="term" value="C:cytoplasm"/>
    <property type="evidence" value="ECO:0007669"/>
    <property type="project" value="UniProtKB-ARBA"/>
</dbReference>
<dbReference type="GO" id="GO:0015935">
    <property type="term" value="C:small ribosomal subunit"/>
    <property type="evidence" value="ECO:0007669"/>
    <property type="project" value="TreeGrafter"/>
</dbReference>
<dbReference type="GO" id="GO:0019843">
    <property type="term" value="F:rRNA binding"/>
    <property type="evidence" value="ECO:0007669"/>
    <property type="project" value="UniProtKB-UniRule"/>
</dbReference>
<dbReference type="GO" id="GO:0003735">
    <property type="term" value="F:structural constituent of ribosome"/>
    <property type="evidence" value="ECO:0007669"/>
    <property type="project" value="InterPro"/>
</dbReference>
<dbReference type="GO" id="GO:0006412">
    <property type="term" value="P:translation"/>
    <property type="evidence" value="ECO:0007669"/>
    <property type="project" value="UniProtKB-UniRule"/>
</dbReference>
<dbReference type="FunFam" id="1.10.287.1480:FF:000001">
    <property type="entry name" value="30S ribosomal protein S14"/>
    <property type="match status" value="1"/>
</dbReference>
<dbReference type="Gene3D" id="1.10.287.1480">
    <property type="match status" value="1"/>
</dbReference>
<dbReference type="HAMAP" id="MF_00537">
    <property type="entry name" value="Ribosomal_uS14_1"/>
    <property type="match status" value="1"/>
</dbReference>
<dbReference type="InterPro" id="IPR001209">
    <property type="entry name" value="Ribosomal_uS14"/>
</dbReference>
<dbReference type="InterPro" id="IPR023036">
    <property type="entry name" value="Ribosomal_uS14_bac/plastid"/>
</dbReference>
<dbReference type="InterPro" id="IPR018271">
    <property type="entry name" value="Ribosomal_uS14_CS"/>
</dbReference>
<dbReference type="NCBIfam" id="NF006477">
    <property type="entry name" value="PRK08881.1"/>
    <property type="match status" value="1"/>
</dbReference>
<dbReference type="PANTHER" id="PTHR19836">
    <property type="entry name" value="30S RIBOSOMAL PROTEIN S14"/>
    <property type="match status" value="1"/>
</dbReference>
<dbReference type="PANTHER" id="PTHR19836:SF19">
    <property type="entry name" value="SMALL RIBOSOMAL SUBUNIT PROTEIN US14M"/>
    <property type="match status" value="1"/>
</dbReference>
<dbReference type="Pfam" id="PF00253">
    <property type="entry name" value="Ribosomal_S14"/>
    <property type="match status" value="1"/>
</dbReference>
<dbReference type="SUPFAM" id="SSF57716">
    <property type="entry name" value="Glucocorticoid receptor-like (DNA-binding domain)"/>
    <property type="match status" value="1"/>
</dbReference>
<dbReference type="PROSITE" id="PS00527">
    <property type="entry name" value="RIBOSOMAL_S14"/>
    <property type="match status" value="1"/>
</dbReference>
<keyword id="KW-0687">Ribonucleoprotein</keyword>
<keyword id="KW-0689">Ribosomal protein</keyword>
<keyword id="KW-0694">RNA-binding</keyword>
<keyword id="KW-0699">rRNA-binding</keyword>
<proteinExistence type="inferred from homology"/>
<feature type="chain" id="PRO_0000130921" description="Small ribosomal subunit protein uS14">
    <location>
        <begin position="1"/>
        <end position="101"/>
    </location>
</feature>
<feature type="region of interest" description="Disordered" evidence="2">
    <location>
        <begin position="1"/>
        <end position="22"/>
    </location>
</feature>
<feature type="compositionally biased region" description="Basic residues" evidence="2">
    <location>
        <begin position="11"/>
        <end position="22"/>
    </location>
</feature>
<name>RS14_RICCN</name>
<evidence type="ECO:0000255" key="1">
    <source>
        <dbReference type="HAMAP-Rule" id="MF_00537"/>
    </source>
</evidence>
<evidence type="ECO:0000256" key="2">
    <source>
        <dbReference type="SAM" id="MobiDB-lite"/>
    </source>
</evidence>
<evidence type="ECO:0000305" key="3"/>
<organism>
    <name type="scientific">Rickettsia conorii (strain ATCC VR-613 / Malish 7)</name>
    <dbReference type="NCBI Taxonomy" id="272944"/>
    <lineage>
        <taxon>Bacteria</taxon>
        <taxon>Pseudomonadati</taxon>
        <taxon>Pseudomonadota</taxon>
        <taxon>Alphaproteobacteria</taxon>
        <taxon>Rickettsiales</taxon>
        <taxon>Rickettsiaceae</taxon>
        <taxon>Rickettsieae</taxon>
        <taxon>Rickettsia</taxon>
        <taxon>spotted fever group</taxon>
    </lineage>
</organism>
<reference key="1">
    <citation type="journal article" date="2001" name="Science">
        <title>Mechanisms of evolution in Rickettsia conorii and R. prowazekii.</title>
        <authorList>
            <person name="Ogata H."/>
            <person name="Audic S."/>
            <person name="Renesto-Audiffren P."/>
            <person name="Fournier P.-E."/>
            <person name="Barbe V."/>
            <person name="Samson D."/>
            <person name="Roux V."/>
            <person name="Cossart P."/>
            <person name="Weissenbach J."/>
            <person name="Claverie J.-M."/>
            <person name="Raoult D."/>
        </authorList>
    </citation>
    <scope>NUCLEOTIDE SEQUENCE [LARGE SCALE GENOMIC DNA]</scope>
    <source>
        <strain>ATCC VR-613 / Malish 7</strain>
    </source>
</reference>
<gene>
    <name evidence="1" type="primary">rpsN</name>
    <name type="ordered locus">RC0993</name>
</gene>
<accession>Q92GX9</accession>
<sequence length="101" mass="11538">MAKVSSIKKNESRKKKSQSLHNKRLALKSKIYDKNISLEERFSLVMSLAQLPRNSSSTRIRNRCELTGRPRGVTRKFGISRNKLRELIGRGLVPGVVKSSW</sequence>
<protein>
    <recommendedName>
        <fullName evidence="1">Small ribosomal subunit protein uS14</fullName>
    </recommendedName>
    <alternativeName>
        <fullName evidence="3">30S ribosomal protein S14</fullName>
    </alternativeName>
</protein>